<protein>
    <recommendedName>
        <fullName>Translocon-associated protein subunit alpha</fullName>
        <shortName>TRAP-alpha</shortName>
    </recommendedName>
    <alternativeName>
        <fullName>Signal sequence receptor subunit alpha</fullName>
        <shortName>SSR-alpha</shortName>
    </alternativeName>
</protein>
<dbReference type="EMBL" id="CR861115">
    <property type="protein sequence ID" value="CAH93192.1"/>
    <property type="molecule type" value="mRNA"/>
</dbReference>
<dbReference type="RefSeq" id="NP_001126878.1">
    <property type="nucleotide sequence ID" value="NM_001133406.2"/>
</dbReference>
<dbReference type="SMR" id="Q5R4X4"/>
<dbReference type="STRING" id="9601.ENSPPYP00000018126"/>
<dbReference type="GlyCosmos" id="Q5R4X4">
    <property type="glycosylation" value="2 sites, No reported glycans"/>
</dbReference>
<dbReference type="Ensembl" id="ENSPPYT00000050058.1">
    <property type="protein sequence ID" value="ENSPPYP00000033492.1"/>
    <property type="gene ID" value="ENSPPYG00000016205.3"/>
</dbReference>
<dbReference type="GeneID" id="100173891"/>
<dbReference type="KEGG" id="pon:100173891"/>
<dbReference type="CTD" id="6745"/>
<dbReference type="eggNOG" id="KOG1631">
    <property type="taxonomic scope" value="Eukaryota"/>
</dbReference>
<dbReference type="GeneTree" id="ENSGT00400000022103"/>
<dbReference type="InParanoid" id="Q5R4X4"/>
<dbReference type="OMA" id="TFPYSFT"/>
<dbReference type="OrthoDB" id="1926781at2759"/>
<dbReference type="Proteomes" id="UP000001595">
    <property type="component" value="Chromosome 6"/>
</dbReference>
<dbReference type="GO" id="GO:0005789">
    <property type="term" value="C:endoplasmic reticulum membrane"/>
    <property type="evidence" value="ECO:0007669"/>
    <property type="project" value="UniProtKB-SubCell"/>
</dbReference>
<dbReference type="InterPro" id="IPR005595">
    <property type="entry name" value="TRAP_alpha"/>
</dbReference>
<dbReference type="PANTHER" id="PTHR12924:SF0">
    <property type="entry name" value="TRANSLOCON-ASSOCIATED PROTEIN SUBUNIT ALPHA"/>
    <property type="match status" value="1"/>
</dbReference>
<dbReference type="PANTHER" id="PTHR12924">
    <property type="entry name" value="TRANSLOCON-ASSOCIATED PROTEIN, ALPHA SUBUNIT"/>
    <property type="match status" value="1"/>
</dbReference>
<dbReference type="Pfam" id="PF03896">
    <property type="entry name" value="TRAP_alpha"/>
    <property type="match status" value="1"/>
</dbReference>
<feature type="signal peptide" evidence="3">
    <location>
        <begin position="1"/>
        <end position="20"/>
    </location>
</feature>
<feature type="chain" id="PRO_0000033283" description="Translocon-associated protein subunit alpha">
    <location>
        <begin position="21"/>
        <end position="291"/>
    </location>
</feature>
<feature type="topological domain" description="Lumenal" evidence="3">
    <location>
        <begin position="21"/>
        <end position="207"/>
    </location>
</feature>
<feature type="transmembrane region" description="Helical" evidence="3">
    <location>
        <begin position="208"/>
        <end position="228"/>
    </location>
</feature>
<feature type="topological domain" description="Cytoplasmic" evidence="3">
    <location>
        <begin position="229"/>
        <end position="291"/>
    </location>
</feature>
<feature type="region of interest" description="Disordered" evidence="4">
    <location>
        <begin position="34"/>
        <end position="83"/>
    </location>
</feature>
<feature type="region of interest" description="Disordered" evidence="4">
    <location>
        <begin position="263"/>
        <end position="291"/>
    </location>
</feature>
<feature type="compositionally biased region" description="Acidic residues" evidence="4">
    <location>
        <begin position="35"/>
        <end position="75"/>
    </location>
</feature>
<feature type="compositionally biased region" description="Basic residues" evidence="4">
    <location>
        <begin position="274"/>
        <end position="284"/>
    </location>
</feature>
<feature type="modified residue" description="Phosphoserine" evidence="2">
    <location>
        <position position="247"/>
    </location>
</feature>
<feature type="modified residue" description="Phosphothreonine" evidence="2">
    <location>
        <position position="260"/>
    </location>
</feature>
<feature type="modified residue" description="Phosphoserine" evidence="2">
    <location>
        <position position="273"/>
    </location>
</feature>
<feature type="glycosylation site" description="N-linked (GlcNAc...) asparagine" evidence="3">
    <location>
        <position position="136"/>
    </location>
</feature>
<feature type="glycosylation site" description="N-linked (GlcNAc...) asparagine" evidence="3">
    <location>
        <position position="191"/>
    </location>
</feature>
<sequence length="291" mass="32855">MRLLPRLLLLLLLVFPATVLFRGGPRGSLAVAQDLTEDEETVEDSIIEDEDDEAEVEEDEPTDLVEDKEEEDVSGEPEASPSADTTILFVKGEDFPANNIVKFLVGFTNKGTEDFIVESLDASFRYPQDYQFYIQNFTALPLNTVVPPQRQATFEYSFIPAEPMGGRPFGLVINLNYKDLNGNVFQDAVFNQTVTVIEREDGLDGETIFMYMFLAGLGLLVIVGLHQLLESRKRKRPVQKVEMGTSSQNDVDMSWIPQETLNQIMQSRRDKASPRRLPRKRAQKRSVGSDE</sequence>
<keyword id="KW-0106">Calcium</keyword>
<keyword id="KW-0256">Endoplasmic reticulum</keyword>
<keyword id="KW-0325">Glycoprotein</keyword>
<keyword id="KW-0472">Membrane</keyword>
<keyword id="KW-0597">Phosphoprotein</keyword>
<keyword id="KW-1185">Reference proteome</keyword>
<keyword id="KW-0732">Signal</keyword>
<keyword id="KW-0812">Transmembrane</keyword>
<keyword id="KW-1133">Transmembrane helix</keyword>
<organism>
    <name type="scientific">Pongo abelii</name>
    <name type="common">Sumatran orangutan</name>
    <name type="synonym">Pongo pygmaeus abelii</name>
    <dbReference type="NCBI Taxonomy" id="9601"/>
    <lineage>
        <taxon>Eukaryota</taxon>
        <taxon>Metazoa</taxon>
        <taxon>Chordata</taxon>
        <taxon>Craniata</taxon>
        <taxon>Vertebrata</taxon>
        <taxon>Euteleostomi</taxon>
        <taxon>Mammalia</taxon>
        <taxon>Eutheria</taxon>
        <taxon>Euarchontoglires</taxon>
        <taxon>Primates</taxon>
        <taxon>Haplorrhini</taxon>
        <taxon>Catarrhini</taxon>
        <taxon>Hominidae</taxon>
        <taxon>Pongo</taxon>
    </lineage>
</organism>
<accession>Q5R4X4</accession>
<name>SSRA_PONAB</name>
<evidence type="ECO:0000250" key="1"/>
<evidence type="ECO:0000250" key="2">
    <source>
        <dbReference type="UniProtKB" id="P43307"/>
    </source>
</evidence>
<evidence type="ECO:0000255" key="3"/>
<evidence type="ECO:0000256" key="4">
    <source>
        <dbReference type="SAM" id="MobiDB-lite"/>
    </source>
</evidence>
<evidence type="ECO:0000305" key="5"/>
<comment type="function">
    <text evidence="1">TRAP proteins are part of a complex whose function is to bind calcium to the ER membrane and thereby regulate the retention of ER resident proteins. May be involved in the recycling of the translocation apparatus after completion of the translocation process or may function as a membrane-bound chaperone facilitating folding of translocated proteins (By similarity).</text>
</comment>
<comment type="subunit">
    <text evidence="1">Heterotetramer of TRAP-alpha, TRAP-beta, TRAP-delta and TRAP-gamma. Interacts with palmitoylated calnexin (CALX), the interaction is required for efficient folding of glycosylated proteins (By similarity).</text>
</comment>
<comment type="subcellular location">
    <subcellularLocation>
        <location evidence="1">Endoplasmic reticulum membrane</location>
        <topology evidence="1">Single-pass type I membrane protein</topology>
    </subcellularLocation>
</comment>
<comment type="domain">
    <text>Shows a remarkable charge distribution with the N-terminus being highly negatively charged, and the cytoplasmic C-terminus positively charged.</text>
</comment>
<comment type="PTM">
    <text evidence="1">Phosphorylated in its cytoplasmic tail.</text>
</comment>
<comment type="miscellaneous">
    <text evidence="1">Seems to bind calcium.</text>
</comment>
<comment type="similarity">
    <text evidence="5">Belongs to the TRAP-alpha family.</text>
</comment>
<gene>
    <name type="primary">SSR1</name>
</gene>
<proteinExistence type="evidence at transcript level"/>
<reference key="1">
    <citation type="submission" date="2004-11" db="EMBL/GenBank/DDBJ databases">
        <authorList>
            <consortium name="The German cDNA consortium"/>
        </authorList>
    </citation>
    <scope>NUCLEOTIDE SEQUENCE [LARGE SCALE MRNA]</scope>
    <source>
        <tissue>Brain cortex</tissue>
    </source>
</reference>